<feature type="chain" id="PRO_1000120381" description="GMP synthase [glutamine-hydrolyzing]">
    <location>
        <begin position="1"/>
        <end position="540"/>
    </location>
</feature>
<feature type="domain" description="Glutamine amidotransferase type-1" evidence="1">
    <location>
        <begin position="29"/>
        <end position="222"/>
    </location>
</feature>
<feature type="domain" description="GMPS ATP-PPase" evidence="1">
    <location>
        <begin position="223"/>
        <end position="415"/>
    </location>
</feature>
<feature type="active site" description="Nucleophile" evidence="1">
    <location>
        <position position="106"/>
    </location>
</feature>
<feature type="active site" evidence="1">
    <location>
        <position position="196"/>
    </location>
</feature>
<feature type="active site" evidence="1">
    <location>
        <position position="198"/>
    </location>
</feature>
<feature type="binding site" evidence="1">
    <location>
        <begin position="250"/>
        <end position="256"/>
    </location>
    <ligand>
        <name>ATP</name>
        <dbReference type="ChEBI" id="CHEBI:30616"/>
    </ligand>
</feature>
<gene>
    <name evidence="1" type="primary">guaA</name>
    <name type="ordered locus">RPB_3189</name>
</gene>
<comment type="function">
    <text evidence="1">Catalyzes the synthesis of GMP from XMP.</text>
</comment>
<comment type="catalytic activity">
    <reaction evidence="1">
        <text>XMP + L-glutamine + ATP + H2O = GMP + L-glutamate + AMP + diphosphate + 2 H(+)</text>
        <dbReference type="Rhea" id="RHEA:11680"/>
        <dbReference type="ChEBI" id="CHEBI:15377"/>
        <dbReference type="ChEBI" id="CHEBI:15378"/>
        <dbReference type="ChEBI" id="CHEBI:29985"/>
        <dbReference type="ChEBI" id="CHEBI:30616"/>
        <dbReference type="ChEBI" id="CHEBI:33019"/>
        <dbReference type="ChEBI" id="CHEBI:57464"/>
        <dbReference type="ChEBI" id="CHEBI:58115"/>
        <dbReference type="ChEBI" id="CHEBI:58359"/>
        <dbReference type="ChEBI" id="CHEBI:456215"/>
        <dbReference type="EC" id="6.3.5.2"/>
    </reaction>
</comment>
<comment type="pathway">
    <text evidence="1">Purine metabolism; GMP biosynthesis; GMP from XMP (L-Gln route): step 1/1.</text>
</comment>
<comment type="subunit">
    <text evidence="1">Homodimer.</text>
</comment>
<organism>
    <name type="scientific">Rhodopseudomonas palustris (strain HaA2)</name>
    <dbReference type="NCBI Taxonomy" id="316058"/>
    <lineage>
        <taxon>Bacteria</taxon>
        <taxon>Pseudomonadati</taxon>
        <taxon>Pseudomonadota</taxon>
        <taxon>Alphaproteobacteria</taxon>
        <taxon>Hyphomicrobiales</taxon>
        <taxon>Nitrobacteraceae</taxon>
        <taxon>Rhodopseudomonas</taxon>
    </lineage>
</organism>
<name>GUAA_RHOP2</name>
<sequence length="540" mass="58230">MTAPSTPSASSVVPSGADTSPHVAAIHEKILIVDFGSQVTQLIARRVREEGVYSEIVPFQKAEAAFAEMKPKAVILSGGPASVLDADAPAAPMAILEAGVPVLGICYGEQTLAKQLGGTVEAGHHREFGRATIEITDDCALFDGVWQKGGTYDVWMSHGDRVTKLPDGFRGVAKAPGSPISVIADDKRKFYATQFHLEVVHTPDGAKILRNFVRKVAGLTGDWTMRAFREEAIEKIRAQVGTGKVICGLSGGVDSAVAAVLIHEAIGDQLTCVFVDHGMLRKDEAKTVVDLFRHHYNIPLVHVDASETFLGALSGVTDPEQKRKIIGKLFIDVFDAEAKVVGGADYLAQGTLYPDVIESVSFTGGPSVTIKSHHNVGGLPERMNMKLVEPLRELFKDEVRALGRELGLPEIFVGRHPFPGPGLAIRCPGEITAEKLDILRNADAVYIDQIRKAGLYDAIWQAFAVLLPVKTVGVMGDGRTYEYVVGLRAVTSTDGMTADYYPFDMAFLGATATRIINEVKGVNRVVYDVTSKPPGTIEWE</sequence>
<protein>
    <recommendedName>
        <fullName evidence="1">GMP synthase [glutamine-hydrolyzing]</fullName>
        <ecNumber evidence="1">6.3.5.2</ecNumber>
    </recommendedName>
    <alternativeName>
        <fullName evidence="1">GMP synthetase</fullName>
    </alternativeName>
    <alternativeName>
        <fullName evidence="1">Glutamine amidotransferase</fullName>
    </alternativeName>
</protein>
<evidence type="ECO:0000255" key="1">
    <source>
        <dbReference type="HAMAP-Rule" id="MF_00344"/>
    </source>
</evidence>
<reference key="1">
    <citation type="submission" date="2006-01" db="EMBL/GenBank/DDBJ databases">
        <title>Complete sequence of Rhodopseudomonas palustris HaA2.</title>
        <authorList>
            <consortium name="US DOE Joint Genome Institute"/>
            <person name="Copeland A."/>
            <person name="Lucas S."/>
            <person name="Lapidus A."/>
            <person name="Barry K."/>
            <person name="Detter J.C."/>
            <person name="Glavina T."/>
            <person name="Hammon N."/>
            <person name="Israni S."/>
            <person name="Pitluck S."/>
            <person name="Chain P."/>
            <person name="Malfatti S."/>
            <person name="Shin M."/>
            <person name="Vergez L."/>
            <person name="Schmutz J."/>
            <person name="Larimer F."/>
            <person name="Land M."/>
            <person name="Hauser L."/>
            <person name="Pelletier D.A."/>
            <person name="Kyrpides N."/>
            <person name="Anderson I."/>
            <person name="Oda Y."/>
            <person name="Harwood C.S."/>
            <person name="Richardson P."/>
        </authorList>
    </citation>
    <scope>NUCLEOTIDE SEQUENCE [LARGE SCALE GENOMIC DNA]</scope>
    <source>
        <strain>HaA2</strain>
    </source>
</reference>
<keyword id="KW-0067">ATP-binding</keyword>
<keyword id="KW-0315">Glutamine amidotransferase</keyword>
<keyword id="KW-0332">GMP biosynthesis</keyword>
<keyword id="KW-0436">Ligase</keyword>
<keyword id="KW-0547">Nucleotide-binding</keyword>
<keyword id="KW-0658">Purine biosynthesis</keyword>
<keyword id="KW-1185">Reference proteome</keyword>
<proteinExistence type="inferred from homology"/>
<accession>Q2IV75</accession>
<dbReference type="EC" id="6.3.5.2" evidence="1"/>
<dbReference type="EMBL" id="CP000250">
    <property type="protein sequence ID" value="ABD07885.1"/>
    <property type="molecule type" value="Genomic_DNA"/>
</dbReference>
<dbReference type="RefSeq" id="WP_011442069.1">
    <property type="nucleotide sequence ID" value="NC_007778.1"/>
</dbReference>
<dbReference type="SMR" id="Q2IV75"/>
<dbReference type="STRING" id="316058.RPB_3189"/>
<dbReference type="MEROPS" id="C26.957"/>
<dbReference type="KEGG" id="rpb:RPB_3189"/>
<dbReference type="eggNOG" id="COG0518">
    <property type="taxonomic scope" value="Bacteria"/>
</dbReference>
<dbReference type="eggNOG" id="COG0519">
    <property type="taxonomic scope" value="Bacteria"/>
</dbReference>
<dbReference type="HOGENOM" id="CLU_014340_0_5_5"/>
<dbReference type="OrthoDB" id="9802219at2"/>
<dbReference type="UniPathway" id="UPA00189">
    <property type="reaction ID" value="UER00296"/>
</dbReference>
<dbReference type="Proteomes" id="UP000008809">
    <property type="component" value="Chromosome"/>
</dbReference>
<dbReference type="GO" id="GO:0005829">
    <property type="term" value="C:cytosol"/>
    <property type="evidence" value="ECO:0007669"/>
    <property type="project" value="TreeGrafter"/>
</dbReference>
<dbReference type="GO" id="GO:0005524">
    <property type="term" value="F:ATP binding"/>
    <property type="evidence" value="ECO:0007669"/>
    <property type="project" value="UniProtKB-UniRule"/>
</dbReference>
<dbReference type="GO" id="GO:0003921">
    <property type="term" value="F:GMP synthase activity"/>
    <property type="evidence" value="ECO:0007669"/>
    <property type="project" value="InterPro"/>
</dbReference>
<dbReference type="CDD" id="cd01742">
    <property type="entry name" value="GATase1_GMP_Synthase"/>
    <property type="match status" value="1"/>
</dbReference>
<dbReference type="CDD" id="cd01997">
    <property type="entry name" value="GMP_synthase_C"/>
    <property type="match status" value="1"/>
</dbReference>
<dbReference type="FunFam" id="3.30.300.10:FF:000002">
    <property type="entry name" value="GMP synthase [glutamine-hydrolyzing]"/>
    <property type="match status" value="1"/>
</dbReference>
<dbReference type="FunFam" id="3.40.50.620:FF:000001">
    <property type="entry name" value="GMP synthase [glutamine-hydrolyzing]"/>
    <property type="match status" value="1"/>
</dbReference>
<dbReference type="FunFam" id="3.40.50.880:FF:000001">
    <property type="entry name" value="GMP synthase [glutamine-hydrolyzing]"/>
    <property type="match status" value="1"/>
</dbReference>
<dbReference type="Gene3D" id="3.30.300.10">
    <property type="match status" value="1"/>
</dbReference>
<dbReference type="Gene3D" id="3.40.50.880">
    <property type="match status" value="1"/>
</dbReference>
<dbReference type="Gene3D" id="3.40.50.620">
    <property type="entry name" value="HUPs"/>
    <property type="match status" value="1"/>
</dbReference>
<dbReference type="HAMAP" id="MF_00344">
    <property type="entry name" value="GMP_synthase"/>
    <property type="match status" value="1"/>
</dbReference>
<dbReference type="InterPro" id="IPR029062">
    <property type="entry name" value="Class_I_gatase-like"/>
</dbReference>
<dbReference type="InterPro" id="IPR017926">
    <property type="entry name" value="GATASE"/>
</dbReference>
<dbReference type="InterPro" id="IPR001674">
    <property type="entry name" value="GMP_synth_C"/>
</dbReference>
<dbReference type="InterPro" id="IPR004739">
    <property type="entry name" value="GMP_synth_GATase"/>
</dbReference>
<dbReference type="InterPro" id="IPR022955">
    <property type="entry name" value="GMP_synthase"/>
</dbReference>
<dbReference type="InterPro" id="IPR025777">
    <property type="entry name" value="GMPS_ATP_PPase_dom"/>
</dbReference>
<dbReference type="InterPro" id="IPR022310">
    <property type="entry name" value="NAD/GMP_synthase"/>
</dbReference>
<dbReference type="InterPro" id="IPR014729">
    <property type="entry name" value="Rossmann-like_a/b/a_fold"/>
</dbReference>
<dbReference type="NCBIfam" id="TIGR00884">
    <property type="entry name" value="guaA_Cterm"/>
    <property type="match status" value="1"/>
</dbReference>
<dbReference type="NCBIfam" id="TIGR00888">
    <property type="entry name" value="guaA_Nterm"/>
    <property type="match status" value="1"/>
</dbReference>
<dbReference type="NCBIfam" id="NF000848">
    <property type="entry name" value="PRK00074.1"/>
    <property type="match status" value="1"/>
</dbReference>
<dbReference type="PANTHER" id="PTHR11922:SF2">
    <property type="entry name" value="GMP SYNTHASE [GLUTAMINE-HYDROLYZING]"/>
    <property type="match status" value="1"/>
</dbReference>
<dbReference type="PANTHER" id="PTHR11922">
    <property type="entry name" value="GMP SYNTHASE-RELATED"/>
    <property type="match status" value="1"/>
</dbReference>
<dbReference type="Pfam" id="PF00117">
    <property type="entry name" value="GATase"/>
    <property type="match status" value="1"/>
</dbReference>
<dbReference type="Pfam" id="PF00958">
    <property type="entry name" value="GMP_synt_C"/>
    <property type="match status" value="1"/>
</dbReference>
<dbReference type="Pfam" id="PF02540">
    <property type="entry name" value="NAD_synthase"/>
    <property type="match status" value="1"/>
</dbReference>
<dbReference type="PRINTS" id="PR00096">
    <property type="entry name" value="GATASE"/>
</dbReference>
<dbReference type="SUPFAM" id="SSF52402">
    <property type="entry name" value="Adenine nucleotide alpha hydrolases-like"/>
    <property type="match status" value="1"/>
</dbReference>
<dbReference type="SUPFAM" id="SSF52317">
    <property type="entry name" value="Class I glutamine amidotransferase-like"/>
    <property type="match status" value="1"/>
</dbReference>
<dbReference type="SUPFAM" id="SSF54810">
    <property type="entry name" value="GMP synthetase C-terminal dimerisation domain"/>
    <property type="match status" value="1"/>
</dbReference>
<dbReference type="PROSITE" id="PS51273">
    <property type="entry name" value="GATASE_TYPE_1"/>
    <property type="match status" value="1"/>
</dbReference>
<dbReference type="PROSITE" id="PS51553">
    <property type="entry name" value="GMPS_ATP_PPASE"/>
    <property type="match status" value="1"/>
</dbReference>